<comment type="function">
    <text evidence="2">Secreted effector that partially suppresses the host cell death induced by cell death-inducing proteins.</text>
</comment>
<comment type="subcellular location">
    <subcellularLocation>
        <location evidence="2">Secreted</location>
    </subcellularLocation>
    <subcellularLocation>
        <location evidence="2">Host nucleus</location>
    </subcellularLocation>
    <subcellularLocation>
        <location evidence="2">Host cytoplasm</location>
    </subcellularLocation>
</comment>
<comment type="domain">
    <text evidence="5">Has the canonical translocation RxLR motif, but lacks the canonical EER motif, which characterizes most oomycete effectors identified so far.</text>
</comment>
<comment type="similarity">
    <text evidence="4">Belongs to the RxLR effector family.</text>
</comment>
<reference key="1">
    <citation type="journal article" date="2018" name="Front. Plant Sci.">
        <title>In planta functional analysis and subcellular localization of the oomycete pathogen Plasmopara viticola candidate RXLR effector repertoire.</title>
        <authorList>
            <person name="Liu Y."/>
            <person name="Lan X."/>
            <person name="Song S."/>
            <person name="Yin L."/>
            <person name="Dry I.B."/>
            <person name="Qu J."/>
            <person name="Xiang J."/>
            <person name="Lu J."/>
        </authorList>
    </citation>
    <scope>NUCLEOTIDE SEQUENCE [MRNA]</scope>
    <scope>DOMAIN</scope>
    <scope>FUNCTION</scope>
    <scope>SUBCELLULAR LOCATION</scope>
</reference>
<feature type="signal peptide" evidence="1">
    <location>
        <begin position="1"/>
        <end position="20"/>
    </location>
</feature>
<feature type="chain" id="PRO_0000447908" description="Secreted RxLR effector protein 20">
    <location>
        <begin position="21"/>
        <end position="95"/>
    </location>
</feature>
<feature type="short sequence motif" description="RxLR" evidence="5">
    <location>
        <begin position="47"/>
        <end position="50"/>
    </location>
</feature>
<name>RLR20_PLAVT</name>
<evidence type="ECO:0000255" key="1"/>
<evidence type="ECO:0000269" key="2">
    <source>
    </source>
</evidence>
<evidence type="ECO:0000303" key="3">
    <source>
    </source>
</evidence>
<evidence type="ECO:0000305" key="4"/>
<evidence type="ECO:0000305" key="5">
    <source>
    </source>
</evidence>
<gene>
    <name evidence="3" type="primary">RXLR20</name>
</gene>
<keyword id="KW-1035">Host cytoplasm</keyword>
<keyword id="KW-1048">Host nucleus</keyword>
<keyword id="KW-0964">Secreted</keyword>
<keyword id="KW-0732">Signal</keyword>
<keyword id="KW-0843">Virulence</keyword>
<accession>P0CU99</accession>
<sequence>MQSPYIILFALVTLLGSISGGATSTIATRNGDVGLTSAGPTFVRKQRLLRQDPNLYETIMNDRSASAFANALRKAEMAAETEVAPLVRSTNYNDS</sequence>
<dbReference type="SMR" id="P0CU99"/>
<dbReference type="GO" id="GO:0005576">
    <property type="term" value="C:extracellular region"/>
    <property type="evidence" value="ECO:0007669"/>
    <property type="project" value="UniProtKB-SubCell"/>
</dbReference>
<dbReference type="GO" id="GO:0030430">
    <property type="term" value="C:host cell cytoplasm"/>
    <property type="evidence" value="ECO:0007669"/>
    <property type="project" value="UniProtKB-SubCell"/>
</dbReference>
<dbReference type="GO" id="GO:0042025">
    <property type="term" value="C:host cell nucleus"/>
    <property type="evidence" value="ECO:0007669"/>
    <property type="project" value="UniProtKB-SubCell"/>
</dbReference>
<organism>
    <name type="scientific">Plasmopara viticola</name>
    <name type="common">Downy mildew of grapevine</name>
    <name type="synonym">Botrytis viticola</name>
    <dbReference type="NCBI Taxonomy" id="143451"/>
    <lineage>
        <taxon>Eukaryota</taxon>
        <taxon>Sar</taxon>
        <taxon>Stramenopiles</taxon>
        <taxon>Oomycota</taxon>
        <taxon>Peronosporales</taxon>
        <taxon>Peronosporaceae</taxon>
        <taxon>Plasmopara</taxon>
    </lineage>
</organism>
<protein>
    <recommendedName>
        <fullName evidence="3">Secreted RxLR effector protein 20</fullName>
    </recommendedName>
</protein>
<proteinExistence type="inferred from homology"/>